<sequence length="573" mass="63113">MATLAAPPPPLGESGNSNSVSRITREGKKITYKLNIMQQPKRARACGQGSKSHTDRRPVDPPPVIELNIFESDPHDDSNKTDITFVYNANFFLFATLEPERPIATGKLMTNQGSPVLTGVPVAGVAYLDKPNRAGYFIFPDLSVRNEGSYRFSFHLFEQIKDPKDATEGTQPMPSPVPGKLSSPQEFLEFRLEVISNPFIVYSAKKFPGLTTSTPISRMIAEQGCRVRIRRDVRMRRRGDKRTEDYDYDNERGYNNRRPDQYAGSDAYANAPERPRSTSISTNMDPYSYPSRRPSAVEYGQPIAQPYQRPMASTPAPSSTPIPAPIPMPGPVALPPSTPSPASAHAPAPPSVPLAAPPPLHTPSYQSHLSFGATQTQYPAPQLSHIPQQTTTPTHPYSPRSSISHSRNQSISEYEPSMGYPGSQTRLSAERPSYGQPSQTTSLPPLRHSLEPSVNSRSKTPSNMITSLPPIQSLSELPSTTSQPSSAIGSSPANEPGPRLWETNSMLSKRTYEESFGHDDRPLYNGMRPDSESYPGGMQRRPSYERSSLLDGPDQMAYKRANGRMVSKPATMR</sequence>
<dbReference type="EMBL" id="U95045">
    <property type="protein sequence ID" value="AAC26841.1"/>
    <property type="molecule type" value="Genomic_DNA"/>
</dbReference>
<dbReference type="EMBL" id="AF109316">
    <property type="protein sequence ID" value="AAD42946.1"/>
    <property type="molecule type" value="mRNA"/>
</dbReference>
<dbReference type="EMBL" id="AF335465">
    <property type="protein sequence ID" value="AAK21245.1"/>
    <property type="molecule type" value="Genomic_DNA"/>
</dbReference>
<dbReference type="EMBL" id="BN001308">
    <property type="protein sequence ID" value="CBF88249.1"/>
    <property type="status" value="ALT_SEQ"/>
    <property type="molecule type" value="Genomic_DNA"/>
</dbReference>
<dbReference type="RefSeq" id="XP_658656.1">
    <property type="nucleotide sequence ID" value="XM_653564.1"/>
</dbReference>
<dbReference type="SMR" id="C8VTV4"/>
<dbReference type="STRING" id="227321.C8VTV4"/>
<dbReference type="iPTMnet" id="C8VTV4"/>
<dbReference type="GeneID" id="2876830"/>
<dbReference type="KEGG" id="ani:ANIA_01052"/>
<dbReference type="eggNOG" id="ENOG502QVY9">
    <property type="taxonomic scope" value="Eukaryota"/>
</dbReference>
<dbReference type="HOGENOM" id="CLU_022491_2_0_1"/>
<dbReference type="InParanoid" id="C8VTV4"/>
<dbReference type="OrthoDB" id="5384689at2759"/>
<dbReference type="Proteomes" id="UP000000560">
    <property type="component" value="Chromosome VIII"/>
</dbReference>
<dbReference type="GO" id="GO:0005737">
    <property type="term" value="C:cytoplasm"/>
    <property type="evidence" value="ECO:0007669"/>
    <property type="project" value="UniProtKB-SubCell"/>
</dbReference>
<dbReference type="GO" id="GO:0005634">
    <property type="term" value="C:nucleus"/>
    <property type="evidence" value="ECO:0000318"/>
    <property type="project" value="GO_Central"/>
</dbReference>
<dbReference type="GO" id="GO:0030435">
    <property type="term" value="P:sporulation resulting in formation of a cellular spore"/>
    <property type="evidence" value="ECO:0000318"/>
    <property type="project" value="GO_Central"/>
</dbReference>
<dbReference type="GO" id="GO:0005992">
    <property type="term" value="P:trehalose biosynthetic process"/>
    <property type="evidence" value="ECO:0000318"/>
    <property type="project" value="GO_Central"/>
</dbReference>
<dbReference type="FunFam" id="2.60.40.3960:FF:000001">
    <property type="entry name" value="Sexual development activator VeA"/>
    <property type="match status" value="1"/>
</dbReference>
<dbReference type="Gene3D" id="2.60.40.3960">
    <property type="entry name" value="Velvet domain"/>
    <property type="match status" value="1"/>
</dbReference>
<dbReference type="InterPro" id="IPR021740">
    <property type="entry name" value="Velvet"/>
</dbReference>
<dbReference type="InterPro" id="IPR037525">
    <property type="entry name" value="Velvet_dom"/>
</dbReference>
<dbReference type="InterPro" id="IPR038491">
    <property type="entry name" value="Velvet_dom_sf"/>
</dbReference>
<dbReference type="PANTHER" id="PTHR33572:SF14">
    <property type="entry name" value="DEVELOPMENTAL AND SECONDARY METABOLISM REGULATOR VEA"/>
    <property type="match status" value="1"/>
</dbReference>
<dbReference type="PANTHER" id="PTHR33572">
    <property type="entry name" value="SPORE DEVELOPMENT REGULATOR VOSA"/>
    <property type="match status" value="1"/>
</dbReference>
<dbReference type="Pfam" id="PF11754">
    <property type="entry name" value="Velvet"/>
    <property type="match status" value="2"/>
</dbReference>
<dbReference type="PROSITE" id="PS51821">
    <property type="entry name" value="VELVET"/>
    <property type="match status" value="1"/>
</dbReference>
<gene>
    <name evidence="22" type="primary">veA</name>
    <name type="ORF">ANIA_01052</name>
</gene>
<name>VEA_EMENI</name>
<feature type="chain" id="PRO_0000435759" description="Developmental and secondary metabolism regulator veA">
    <location>
        <begin position="1"/>
        <end position="573"/>
    </location>
</feature>
<feature type="domain" description="Velvet" evidence="1">
    <location>
        <begin position="27"/>
        <end position="230"/>
    </location>
</feature>
<feature type="region of interest" description="Disordered" evidence="2">
    <location>
        <begin position="1"/>
        <end position="24"/>
    </location>
</feature>
<feature type="region of interest" description="Disordered" evidence="2">
    <location>
        <begin position="39"/>
        <end position="63"/>
    </location>
</feature>
<feature type="region of interest" description="Disordered" evidence="2">
    <location>
        <begin position="236"/>
        <end position="295"/>
    </location>
</feature>
<feature type="region of interest" description="Disordered" evidence="2">
    <location>
        <begin position="307"/>
        <end position="367"/>
    </location>
</feature>
<feature type="region of interest" description="Disordered" evidence="2">
    <location>
        <begin position="384"/>
        <end position="573"/>
    </location>
</feature>
<feature type="region of interest" description="PEST" evidence="21">
    <location>
        <begin position="459"/>
        <end position="498"/>
    </location>
</feature>
<feature type="short sequence motif" description="Nuclear localization signal" evidence="24">
    <location>
        <begin position="41"/>
        <end position="46"/>
    </location>
</feature>
<feature type="compositionally biased region" description="Pro residues" evidence="2">
    <location>
        <begin position="1"/>
        <end position="11"/>
    </location>
</feature>
<feature type="compositionally biased region" description="Basic and acidic residues" evidence="2">
    <location>
        <begin position="241"/>
        <end position="260"/>
    </location>
</feature>
<feature type="compositionally biased region" description="Pro residues" evidence="2">
    <location>
        <begin position="318"/>
        <end position="339"/>
    </location>
</feature>
<feature type="compositionally biased region" description="Pro residues" evidence="2">
    <location>
        <begin position="347"/>
        <end position="361"/>
    </location>
</feature>
<feature type="compositionally biased region" description="Low complexity" evidence="2">
    <location>
        <begin position="387"/>
        <end position="412"/>
    </location>
</feature>
<feature type="compositionally biased region" description="Polar residues" evidence="2">
    <location>
        <begin position="452"/>
        <end position="493"/>
    </location>
</feature>
<feature type="compositionally biased region" description="Basic and acidic residues" evidence="2">
    <location>
        <begin position="510"/>
        <end position="522"/>
    </location>
</feature>
<feature type="modified residue" description="Phosphothreonine" evidence="21">
    <location>
        <position position="167"/>
    </location>
</feature>
<feature type="modified residue" description="Phosphothreonine" evidence="21">
    <location>
        <position position="170"/>
    </location>
</feature>
<feature type="modified residue" description="Phosphoserine" evidence="21">
    <location>
        <position position="183"/>
    </location>
</feature>
<feature type="modified residue" description="Phosphotyrosine" evidence="21">
    <location>
        <position position="254"/>
    </location>
</feature>
<feature type="mutagenesis site" description="Leads to strong light induction of conidiation." evidence="21">
    <original>T</original>
    <variation>E</variation>
    <location>
        <position position="167"/>
    </location>
</feature>
<feature type="mutagenesis site" description="Leads to loss of sterigmatocystin production in darkness." evidence="21">
    <original>T</original>
    <variation>V</variation>
    <location>
        <position position="167"/>
    </location>
</feature>
<feature type="mutagenesis site" description="Leads to an increase of sterigmatocystin production in darkness." evidence="21">
    <original>T</original>
    <variation>E</variation>
    <location>
        <position position="170"/>
    </location>
</feature>
<feature type="mutagenesis site" description="Leads to strong light induction of conidiation." evidence="21">
    <original>T</original>
    <variation>V</variation>
    <location>
        <position position="170"/>
    </location>
</feature>
<feature type="mutagenesis site" description="Leads to strong light induction of conidiation." evidence="21">
    <original>S</original>
    <variation>A</variation>
    <location>
        <position position="183"/>
    </location>
</feature>
<feature type="mutagenesis site" description="Leads to increased production of sterigmatocystin in darkness and after illumination." evidence="21">
    <original>S</original>
    <variation>E</variation>
    <location>
        <position position="183"/>
    </location>
</feature>
<feature type="mutagenesis site" description="Leads to increased production of sterigmatocystin in darkness and after illumination." evidence="21">
    <original>Y</original>
    <variation>E</variation>
    <variation>F</variation>
    <location>
        <position position="254"/>
    </location>
</feature>
<organism>
    <name type="scientific">Emericella nidulans (strain FGSC A4 / ATCC 38163 / CBS 112.46 / NRRL 194 / M139)</name>
    <name type="common">Aspergillus nidulans</name>
    <dbReference type="NCBI Taxonomy" id="227321"/>
    <lineage>
        <taxon>Eukaryota</taxon>
        <taxon>Fungi</taxon>
        <taxon>Dikarya</taxon>
        <taxon>Ascomycota</taxon>
        <taxon>Pezizomycotina</taxon>
        <taxon>Eurotiomycetes</taxon>
        <taxon>Eurotiomycetidae</taxon>
        <taxon>Eurotiales</taxon>
        <taxon>Aspergillaceae</taxon>
        <taxon>Aspergillus</taxon>
        <taxon>Aspergillus subgen. Nidulantes</taxon>
    </lineage>
</organism>
<reference key="1">
    <citation type="submission" date="1997-03" db="EMBL/GenBank/DDBJ databases">
        <title>The veA gene is required for light-dependent conidiation in Emericella (Aspergillus) nidulans.</title>
        <authorList>
            <person name="Yager L.N."/>
            <person name="Kennedy P.A."/>
        </authorList>
    </citation>
    <scope>NUCLEOTIDE SEQUENCE [GENOMIC DNA]</scope>
    <source>
        <strain>FGSC A4 / ATCC 38163 / CBS 112.46 / NRRL 194 / M139</strain>
    </source>
</reference>
<reference key="2">
    <citation type="journal article" date="2002" name="Fungal Genet. Biol.">
        <title>The veA gene activates sexual development in Aspergillus nidulans.</title>
        <authorList>
            <person name="Kim H.-S."/>
            <person name="Han K.-Y."/>
            <person name="Kim K.-J."/>
            <person name="Han D.-M."/>
            <person name="Jahng K.-Y."/>
            <person name="Chae K.-S."/>
        </authorList>
    </citation>
    <scope>NUCLEOTIDE SEQUENCE [GENOMIC DNA / MRNA]</scope>
    <scope>INDUCTION</scope>
    <scope>FUNCTION</scope>
    <scope>DISRUPTION PHENOTYPE</scope>
    <source>
        <strain>FGSC A4 / ATCC 38163 / CBS 112.46 / NRRL 194 / M139</strain>
    </source>
</reference>
<reference key="3">
    <citation type="journal article" date="2005" name="Nature">
        <title>Sequencing of Aspergillus nidulans and comparative analysis with A. fumigatus and A. oryzae.</title>
        <authorList>
            <person name="Galagan J.E."/>
            <person name="Calvo S.E."/>
            <person name="Cuomo C."/>
            <person name="Ma L.-J."/>
            <person name="Wortman J.R."/>
            <person name="Batzoglou S."/>
            <person name="Lee S.-I."/>
            <person name="Bastuerkmen M."/>
            <person name="Spevak C.C."/>
            <person name="Clutterbuck J."/>
            <person name="Kapitonov V."/>
            <person name="Jurka J."/>
            <person name="Scazzocchio C."/>
            <person name="Farman M.L."/>
            <person name="Butler J."/>
            <person name="Purcell S."/>
            <person name="Harris S."/>
            <person name="Braus G.H."/>
            <person name="Draht O."/>
            <person name="Busch S."/>
            <person name="D'Enfert C."/>
            <person name="Bouchier C."/>
            <person name="Goldman G.H."/>
            <person name="Bell-Pedersen D."/>
            <person name="Griffiths-Jones S."/>
            <person name="Doonan J.H."/>
            <person name="Yu J."/>
            <person name="Vienken K."/>
            <person name="Pain A."/>
            <person name="Freitag M."/>
            <person name="Selker E.U."/>
            <person name="Archer D.B."/>
            <person name="Penalva M.A."/>
            <person name="Oakley B.R."/>
            <person name="Momany M."/>
            <person name="Tanaka T."/>
            <person name="Kumagai T."/>
            <person name="Asai K."/>
            <person name="Machida M."/>
            <person name="Nierman W.C."/>
            <person name="Denning D.W."/>
            <person name="Caddick M.X."/>
            <person name="Hynes M."/>
            <person name="Paoletti M."/>
            <person name="Fischer R."/>
            <person name="Miller B.L."/>
            <person name="Dyer P.S."/>
            <person name="Sachs M.S."/>
            <person name="Osmani S.A."/>
            <person name="Birren B.W."/>
        </authorList>
    </citation>
    <scope>NUCLEOTIDE SEQUENCE [LARGE SCALE GENOMIC DNA]</scope>
    <source>
        <strain evidence="25">FGSC A4 / ATCC 38163 / CBS 112.46 / NRRL 194 / M139</strain>
    </source>
</reference>
<reference key="4">
    <citation type="journal article" date="2009" name="Fungal Genet. Biol.">
        <title>The 2008 update of the Aspergillus nidulans genome annotation: a community effort.</title>
        <authorList>
            <person name="Wortman J.R."/>
            <person name="Gilsenan J.M."/>
            <person name="Joardar V."/>
            <person name="Deegan J."/>
            <person name="Clutterbuck J."/>
            <person name="Andersen M.R."/>
            <person name="Archer D."/>
            <person name="Bencina M."/>
            <person name="Braus G."/>
            <person name="Coutinho P."/>
            <person name="von Dohren H."/>
            <person name="Doonan J."/>
            <person name="Driessen A.J."/>
            <person name="Durek P."/>
            <person name="Espeso E."/>
            <person name="Fekete E."/>
            <person name="Flipphi M."/>
            <person name="Estrada C.G."/>
            <person name="Geysens S."/>
            <person name="Goldman G."/>
            <person name="de Groot P.W."/>
            <person name="Hansen K."/>
            <person name="Harris S.D."/>
            <person name="Heinekamp T."/>
            <person name="Helmstaedt K."/>
            <person name="Henrissat B."/>
            <person name="Hofmann G."/>
            <person name="Homan T."/>
            <person name="Horio T."/>
            <person name="Horiuchi H."/>
            <person name="James S."/>
            <person name="Jones M."/>
            <person name="Karaffa L."/>
            <person name="Karanyi Z."/>
            <person name="Kato M."/>
            <person name="Keller N."/>
            <person name="Kelly D.E."/>
            <person name="Kiel J.A."/>
            <person name="Kim J.M."/>
            <person name="van der Klei I.J."/>
            <person name="Klis F.M."/>
            <person name="Kovalchuk A."/>
            <person name="Krasevec N."/>
            <person name="Kubicek C.P."/>
            <person name="Liu B."/>
            <person name="Maccabe A."/>
            <person name="Meyer V."/>
            <person name="Mirabito P."/>
            <person name="Miskei M."/>
            <person name="Mos M."/>
            <person name="Mullins J."/>
            <person name="Nelson D.R."/>
            <person name="Nielsen J."/>
            <person name="Oakley B.R."/>
            <person name="Osmani S.A."/>
            <person name="Pakula T."/>
            <person name="Paszewski A."/>
            <person name="Paulsen I."/>
            <person name="Pilsyk S."/>
            <person name="Pocsi I."/>
            <person name="Punt P.J."/>
            <person name="Ram A.F."/>
            <person name="Ren Q."/>
            <person name="Robellet X."/>
            <person name="Robson G."/>
            <person name="Seiboth B."/>
            <person name="van Solingen P."/>
            <person name="Specht T."/>
            <person name="Sun J."/>
            <person name="Taheri-Talesh N."/>
            <person name="Takeshita N."/>
            <person name="Ussery D."/>
            <person name="vanKuyk P.A."/>
            <person name="Visser H."/>
            <person name="van de Vondervoort P.J."/>
            <person name="de Vries R.P."/>
            <person name="Walton J."/>
            <person name="Xiang X."/>
            <person name="Xiong Y."/>
            <person name="Zeng A.P."/>
            <person name="Brandt B.W."/>
            <person name="Cornell M.J."/>
            <person name="van den Hondel C.A."/>
            <person name="Visser J."/>
            <person name="Oliver S.G."/>
            <person name="Turner G."/>
        </authorList>
    </citation>
    <scope>GENOME REANNOTATION</scope>
    <source>
        <strain evidence="25">FGSC A4 / ATCC 38163 / CBS 112.46 / NRRL 194 / M139</strain>
    </source>
</reference>
<reference key="5">
    <citation type="journal article" date="1990" name="Genes Dev.">
        <title>Light is required for conidiation in Aspergillus nidulans.</title>
        <authorList>
            <person name="Mooney J.L."/>
            <person name="Yager L.N."/>
        </authorList>
    </citation>
    <scope>FUNCTION</scope>
</reference>
<reference key="6">
    <citation type="journal article" date="1990" name="Genetics">
        <title>Genetic analysis of suppressors of the veA1 mutation in Aspergillus nidulans.</title>
        <authorList>
            <person name="Mooney J.L."/>
            <person name="Hassett D.E."/>
            <person name="Yager L.N."/>
        </authorList>
    </citation>
    <scope>FUNCTION</scope>
    <scope>DISRUPTION PHENOTYPE</scope>
</reference>
<reference key="7">
    <citation type="journal article" date="1998" name="Genetics">
        <title>Analysis of fluG mutations that affect light-dependent conidiation in Aspergillus nidulans.</title>
        <authorList>
            <person name="Yager L.N."/>
            <person name="Lee H.O."/>
            <person name="Nagle D.L."/>
            <person name="Zimmerman J.E."/>
        </authorList>
    </citation>
    <scope>DISRUPTION PHENOTYPE</scope>
</reference>
<reference key="8">
    <citation type="journal article" date="2002" name="Arch. Microbiol.">
        <title>The veA gene is necessary for the inducible expression by fructosyl amines of the Aspergillus nidulans faoA gene encoding fructosyl amino acid oxidase (amadoriase, EC 1.5.3).</title>
        <authorList>
            <person name="Jeong H.Y."/>
            <person name="Song M.H."/>
            <person name="Back J.H."/>
            <person name="Han D.M."/>
            <person name="Wu X."/>
            <person name="Monnier V."/>
            <person name="Jahng K.Y."/>
            <person name="Chae K.S."/>
        </authorList>
    </citation>
    <scope>FUNCTION</scope>
</reference>
<reference key="9">
    <citation type="journal article" date="2003" name="Eukaryot. Cell">
        <title>The expression of sterigmatocystin and penicillin genes in Aspergillus nidulans is controlled by veA, a gene required for sexual development.</title>
        <authorList>
            <person name="Kato N."/>
            <person name="Brooks W."/>
            <person name="Calvo A.M."/>
        </authorList>
    </citation>
    <scope>FUNCTION</scope>
    <scope>DISRUPTION PHENOTYPE</scope>
</reference>
<reference key="10">
    <citation type="journal article" date="2003" name="Fungal Genet. Biol.">
        <title>Expression of the mnpA gene that encodes the mannoprotein of Aspergillus nidulans is dependent on fadA and flbA as well as veA.</title>
        <authorList>
            <person name="Jeong H.Y."/>
            <person name="Kim H."/>
            <person name="Han D.M."/>
            <person name="Jahng K.Y."/>
            <person name="Chae K.S."/>
        </authorList>
    </citation>
    <scope>FUNCTION</scope>
</reference>
<reference key="11">
    <citation type="journal article" date="2007" name="Arch. Microbiol.">
        <title>The light-dependent regulator velvet A of Aspergillus nidulans acts as a repressor of the penicillin biosynthesis.</title>
        <authorList>
            <person name="Sproete P."/>
            <person name="Brakhage A.A."/>
        </authorList>
    </citation>
    <scope>FUNCTION</scope>
</reference>
<reference key="12">
    <citation type="journal article" date="2007" name="Mol. Microbiol.">
        <title>Aspergillus nidulans VeA subcellular localization is dependent on the importin alpha carrier and on light.</title>
        <authorList>
            <person name="Stinnett S.M."/>
            <person name="Espeso E.A."/>
            <person name="Cobeno L."/>
            <person name="Araujo-Bazan L."/>
            <person name="Calvo A.M."/>
        </authorList>
    </citation>
    <scope>SUBCELLULAR LOCATION</scope>
</reference>
<reference key="13">
    <citation type="journal article" date="2008" name="Curr. Biol.">
        <title>Functional and physical interaction of blue- and red-light sensors in Aspergillus nidulans.</title>
        <authorList>
            <person name="Purschwitz J."/>
            <person name="Mueller S."/>
            <person name="Kastner C."/>
            <person name="Schoeser M."/>
            <person name="Haas H."/>
            <person name="Espeso E.A."/>
            <person name="Atoui A."/>
            <person name="Calvo A.M."/>
            <person name="Fischer R."/>
        </authorList>
    </citation>
    <scope>INTERACTION WITH FPHA</scope>
</reference>
<reference key="14">
    <citation type="journal article" date="2008" name="Fungal Genet. Biol.">
        <title>The Aspergillus nidulans esdC (early sexual development) gene is necessary for sexual development and is controlled by veA and a heterotrimeric G protein.</title>
        <authorList>
            <person name="Han K.H."/>
            <person name="Kim J.H."/>
            <person name="Moon H."/>
            <person name="Kim S."/>
            <person name="Lee S.S."/>
            <person name="Han D.M."/>
            <person name="Jahng K.Y."/>
            <person name="Chae K.S."/>
        </authorList>
    </citation>
    <scope>FUNCTION</scope>
</reference>
<reference key="15">
    <citation type="journal article" date="2008" name="Science">
        <title>VelB/VeA/LaeA complex coordinates light signal with fungal development and secondary metabolism.</title>
        <authorList>
            <person name="Bayram O."/>
            <person name="Krappmann S."/>
            <person name="Ni M."/>
            <person name="Bok J.W."/>
            <person name="Helmstaedt K."/>
            <person name="Valerius O."/>
            <person name="Braus-Stromeyer S."/>
            <person name="Kwon N.J."/>
            <person name="Keller N.P."/>
            <person name="Yu J.H."/>
            <person name="Braus G.H."/>
        </authorList>
    </citation>
    <scope>IDENTIFICATION IN THE VELVET COMPLEX</scope>
    <scope>FUNCTION</scope>
    <scope>SUBCELLULAR LOCATION</scope>
</reference>
<reference key="16">
    <citation type="journal article" date="2009" name="Curr. Genet.">
        <title>The veA gene is necessary for the negative regulation of the veA expression in Aspergillus nidulans.</title>
        <authorList>
            <person name="Kim H.Y."/>
            <person name="Han K.H."/>
            <person name="Lee M."/>
            <person name="Oh M."/>
            <person name="Kim H.S."/>
            <person name="Zhixiong X."/>
            <person name="Han D.M."/>
            <person name="Jahng K.Y."/>
            <person name="Kim J.H."/>
            <person name="Chae K.S."/>
        </authorList>
    </citation>
    <scope>INDUCTION</scope>
</reference>
<reference key="17">
    <citation type="journal article" date="2009" name="Fungal Genet. Biol.">
        <title>Importin alpha is an essential nuclear import carrier adaptor required for proper sexual and asexual development and secondary metabolism in Aspergillus nidulans.</title>
        <authorList>
            <person name="Araujo-Bazan L."/>
            <person name="Dhingra S."/>
            <person name="Chu J."/>
            <person name="Fernandez-Martinez J."/>
            <person name="Calvo A.M."/>
            <person name="Espeso E.A."/>
        </authorList>
    </citation>
    <scope>SUBCELLULAR LOCATION</scope>
</reference>
<reference key="18">
    <citation type="journal article" date="2009" name="Mol. Genet. Genomics">
        <title>Mapping the interaction sites of Aspergillus nidulans phytochrome FphA with the global regulator VeA and the White Collar protein LreB.</title>
        <authorList>
            <person name="Purschwitz J."/>
            <person name="Mueller S."/>
            <person name="Fischer R."/>
        </authorList>
    </citation>
    <scope>INTERACTION WITH FPHA</scope>
    <scope>PHOSPHORYLATION</scope>
</reference>
<reference key="19">
    <citation type="journal article" date="2009" name="Mol. Microbiol.">
        <title>The protein kinase ImeB is required for light-mediated inhibition of sexual development and for mycotoxin production in Aspergillus nidulans.</title>
        <authorList>
            <person name="Bayram O."/>
            <person name="Sari F."/>
            <person name="Braus G.H."/>
            <person name="Irniger S."/>
        </authorList>
    </citation>
    <scope>FUNCTION</scope>
</reference>
<reference key="20">
    <citation type="journal article" date="2010" name="Fungal Genet. Biol.">
        <title>Cross-talk between light and glucose regulation controls toxin production and morphogenesis in Aspergillus nidulans.</title>
        <authorList>
            <person name="Atoui A."/>
            <person name="Kastner C."/>
            <person name="Larey C.M."/>
            <person name="Thokala R."/>
            <person name="Etxebeste O."/>
            <person name="Espeso E.A."/>
            <person name="Fischer R."/>
            <person name="Calvo A.M."/>
        </authorList>
    </citation>
    <scope>SUBCELLULAR LOCATION</scope>
</reference>
<reference key="21">
    <citation type="journal article" date="2010" name="PLoS Genet.">
        <title>LaeA control of velvet family regulatory proteins for light-dependent development and fungal cell-type specificity.</title>
        <authorList>
            <person name="Sarikaya Bayram O."/>
            <person name="Bayram O."/>
            <person name="Valerius O."/>
            <person name="Park H.S."/>
            <person name="Irniger S."/>
            <person name="Gerke J."/>
            <person name="Ni M."/>
            <person name="Han K.H."/>
            <person name="Yu J.H."/>
            <person name="Braus G.H."/>
        </authorList>
    </citation>
    <scope>INDUCTION</scope>
</reference>
<reference key="22">
    <citation type="journal article" date="2012" name="Methods Mol. Biol.">
        <title>Identification of protein complexes from filamentous fungi with tandem affinity purification.</title>
        <authorList>
            <person name="Bayram O."/>
            <person name="Bayram O.S."/>
            <person name="Valerius O."/>
            <person name="Joehnk B."/>
            <person name="Braus G.H."/>
        </authorList>
    </citation>
    <scope>IDENTIFICATION IN THE VELVET COMPLEX</scope>
</reference>
<reference key="23">
    <citation type="journal article" date="2013" name="Mol. Microbiol.">
        <title>VeA and MvlA repression of the cryptic orsellinic acid gene cluster in Aspergillus nidulans involves histone 3 acetylation.</title>
        <authorList>
            <person name="Bok J.W."/>
            <person name="Soukup A.A."/>
            <person name="Chadwick E."/>
            <person name="Chiang Y.M."/>
            <person name="Wang C.C."/>
            <person name="Keller N.P."/>
        </authorList>
    </citation>
    <scope>FUNCTION</scope>
</reference>
<reference key="24">
    <citation type="journal article" date="2013" name="PLoS Genet.">
        <title>Secondary metabolism and development is mediated by LlmF control of VeA subcellular localization in Aspergillus nidulans.</title>
        <authorList>
            <person name="Palmer J.M."/>
            <person name="Theisen J.M."/>
            <person name="Duran R.M."/>
            <person name="Grayburn W.S."/>
            <person name="Calvo A.M."/>
            <person name="Keller N.P."/>
        </authorList>
    </citation>
    <scope>SUBCELLULAR LOCATION</scope>
    <scope>INTERACTION WITH LLMF</scope>
</reference>
<reference key="25">
    <citation type="journal article" date="2016" name="Mol. Microbiol.">
        <title>A phosphorylation code of the Aspergillus nidulans global regulator VelvetA (VeA) determines specific functions.</title>
        <authorList>
            <person name="Rauscher S."/>
            <person name="Pacher S."/>
            <person name="Hedtke M."/>
            <person name="Kniemeyer O."/>
            <person name="Fischer R."/>
        </authorList>
    </citation>
    <scope>PHOSPHORYLATION AT THR-167; THR-170; SER-183 AND TYR-254</scope>
    <scope>MUTAGENESIS OF THR-167; THR-170; SER-183 AND TYR-254</scope>
    <scope>INTERACTION WITH VELB AND PHPA</scope>
    <scope>SUBCELLULAR LOCATION</scope>
    <scope>DOMAIN</scope>
    <scope>INDUCTION</scope>
</reference>
<evidence type="ECO:0000255" key="1">
    <source>
        <dbReference type="PROSITE-ProRule" id="PRU01165"/>
    </source>
</evidence>
<evidence type="ECO:0000256" key="2">
    <source>
        <dbReference type="SAM" id="MobiDB-lite"/>
    </source>
</evidence>
<evidence type="ECO:0000269" key="3">
    <source>
    </source>
</evidence>
<evidence type="ECO:0000269" key="4">
    <source>
    </source>
</evidence>
<evidence type="ECO:0000269" key="5">
    <source>
    </source>
</evidence>
<evidence type="ECO:0000269" key="6">
    <source>
    </source>
</evidence>
<evidence type="ECO:0000269" key="7">
    <source>
    </source>
</evidence>
<evidence type="ECO:0000269" key="8">
    <source>
    </source>
</evidence>
<evidence type="ECO:0000269" key="9">
    <source>
    </source>
</evidence>
<evidence type="ECO:0000269" key="10">
    <source>
    </source>
</evidence>
<evidence type="ECO:0000269" key="11">
    <source>
    </source>
</evidence>
<evidence type="ECO:0000269" key="12">
    <source>
    </source>
</evidence>
<evidence type="ECO:0000269" key="13">
    <source>
    </source>
</evidence>
<evidence type="ECO:0000269" key="14">
    <source>
    </source>
</evidence>
<evidence type="ECO:0000269" key="15">
    <source>
    </source>
</evidence>
<evidence type="ECO:0000269" key="16">
    <source>
    </source>
</evidence>
<evidence type="ECO:0000269" key="17">
    <source>
    </source>
</evidence>
<evidence type="ECO:0000269" key="18">
    <source>
    </source>
</evidence>
<evidence type="ECO:0000269" key="19">
    <source>
    </source>
</evidence>
<evidence type="ECO:0000269" key="20">
    <source>
    </source>
</evidence>
<evidence type="ECO:0000269" key="21">
    <source>
    </source>
</evidence>
<evidence type="ECO:0000303" key="22">
    <source>
    </source>
</evidence>
<evidence type="ECO:0000305" key="23"/>
<evidence type="ECO:0000305" key="24">
    <source>
    </source>
</evidence>
<evidence type="ECO:0000312" key="25">
    <source>
        <dbReference type="Proteomes" id="UP000000560"/>
    </source>
</evidence>
<protein>
    <recommendedName>
        <fullName evidence="23">Developmental and secondary metabolism regulator veA</fullName>
    </recommendedName>
    <alternativeName>
        <fullName evidence="23">Velvet complex subunit A</fullName>
    </alternativeName>
</protein>
<proteinExistence type="evidence at protein level"/>
<accession>C8VTV4</accession>
<accession>O74625</accession>
<comment type="function">
    <text evidence="3 4 5 6 8 10 12 15 18 20">Component of the velvet transcription factor complex that controls sexual/asexual developmental ratio in response to light, promoting sexual development in the darkness while stimulating asexual sporulation under illumination (PubMed:12223191, PubMed:14665453, PubMed:18556559, PubMed:19210625, PubMed:2076818, PubMed:2253875). The velvet complex acts as a global regulator for secondary metabolite gene expression (PubMed:18556559). Controls the expression of the sterigmatocystin and penicillin gene clusters (PubMed:14665453, PubMed:17375284). Represses the cryptic ors gene cluster producing orsellinic acid and its F9775 derivatives in a laeA-independent manner (PubMed:23841751). Required for full induction of faoA gene expression by fructosyl amines (PubMed:12375102). Positively regulates the expression of the early sexual development gene esdC (PubMed:17977758). Controls the expression of mannoprotein mnpA (PubMed:12620259).</text>
</comment>
<comment type="subunit">
    <text evidence="9 10 11 19">Component of the heterotrimeric velvet complex composed of laeA, veA and velB; VeA acting as a bridging protein between laeA and velB (PubMed:18556559). Interacts with the light-sensing phytochrome fphA (PubMed:18291652, PubMed:18936976). Interacts with llmF (PubMed:23341778).</text>
</comment>
<comment type="subcellular location">
    <subcellularLocation>
        <location evidence="7 10 13 16 19">Nucleus</location>
    </subcellularLocation>
    <subcellularLocation>
        <location evidence="7 10 13 16 19">Cytoplasm</location>
    </subcellularLocation>
    <text evidence="7 10 13 19">Enriched in the nucleus in the dark (PubMed:17163983, PubMed:18556559, PubMed:20816830). Migration to the nucleus depends on the importin alpha carrier protein KapA (PubMed:17163983, PubMed:19318129). Migration to the nucleus is also controlled by llmF (PubMed:23341778).</text>
</comment>
<comment type="induction">
    <text evidence="3 14 17 21">Expressed almost constitutively at an increased level throughout the asexual and sexual developmental processes (PubMed:12223191). Negatively regulates its own expression (PubMed:19479257). Expression is derepressed in light-illuminated conditions (PubMed:19479257). Expression is regulated by laeA (PubMed:21152013). Regulates its own expression, depending on its phosphorylation state (PubMed:26564476).</text>
</comment>
<comment type="domain">
    <text evidence="21">The C-terminal PEST domain is a region rich in proline, glutamic acid, serine and threonine residues that is required for the light-dependent regulation of development and secondary metabolism.</text>
</comment>
<comment type="PTM">
    <text evidence="11 21">Phosphorylated at Thr-167, Thr-170, Ser-183 and Tyr-254 (PubMed:26564476). Thr-167 should be phosphorylated and T170 and S183 should be dephosphorylated to achieve light induction of conidiation (PubMed:26564476). Phosphorylation of Ser-183 and Tyr-254 influence sterigmatocystin production in a light-independent manner (PubMed:26564476). Phosphorylation of Thr-167 and Thr-170 modulates expression of veA (PubMed:26564476).</text>
</comment>
<comment type="disruption phenotype">
    <text evidence="3 6 15">Aboshes light-dependent conidiation, allowing conidiation to occur in the dark (PubMed:2076818). Impairs formation of sexual structures, even under conditions where sexual development preferentially occurs (PubMed:12223191). Alters the expression of the transcription factors nsdD, steA and brlA, the penicillin biosynthetic genes ipnA and acvA, as well as of the sterigmatocystin-specific regulatory gene aflR (PubMed:14665453).</text>
</comment>
<comment type="similarity">
    <text evidence="23">Belongs to the velvet family. VeA subfamily.</text>
</comment>
<comment type="sequence caution" evidence="23">
    <conflict type="erroneous gene model prediction">
        <sequence resource="EMBL-CDS" id="CBF88249"/>
    </conflict>
</comment>
<keyword id="KW-0963">Cytoplasm</keyword>
<keyword id="KW-0539">Nucleus</keyword>
<keyword id="KW-0597">Phosphoprotein</keyword>
<keyword id="KW-1185">Reference proteome</keyword>
<keyword id="KW-0749">Sporulation</keyword>
<keyword id="KW-0804">Transcription</keyword>
<keyword id="KW-0805">Transcription regulation</keyword>